<comment type="function">
    <text evidence="1">Catalyzes the tRNA-independent activation of glutamate in presence of ATP and the subsequent transfer of glutamate onto a tRNA(Asp). Glutamate is transferred on the 2-amino-5-(4,5-dihydroxy-2-cyclopenten-1-yl) moiety of the queuosine in the wobble position of the QUC anticodon.</text>
</comment>
<comment type="cofactor">
    <cofactor evidence="1">
        <name>Zn(2+)</name>
        <dbReference type="ChEBI" id="CHEBI:29105"/>
    </cofactor>
    <text evidence="1">Binds 1 zinc ion per subunit.</text>
</comment>
<comment type="similarity">
    <text evidence="1">Belongs to the class-I aminoacyl-tRNA synthetase family. GluQ subfamily.</text>
</comment>
<protein>
    <recommendedName>
        <fullName evidence="1">Glutamyl-Q tRNA(Asp) synthetase</fullName>
        <shortName evidence="1">Glu-Q-RSs</shortName>
        <ecNumber evidence="1">6.1.1.-</ecNumber>
    </recommendedName>
</protein>
<name>GLUQ_CORGL</name>
<gene>
    <name evidence="1" type="primary">gluQ</name>
    <name type="ordered locus">Cgl0236</name>
    <name type="ordered locus">cg0289</name>
</gene>
<feature type="chain" id="PRO_0000208296" description="Glutamyl-Q tRNA(Asp) synthetase">
    <location>
        <begin position="1"/>
        <end position="293"/>
    </location>
</feature>
<feature type="short sequence motif" description="'HIGH' region">
    <location>
        <begin position="7"/>
        <end position="17"/>
    </location>
</feature>
<feature type="short sequence motif" description="'KMSKS' region">
    <location>
        <begin position="236"/>
        <end position="240"/>
    </location>
</feature>
<feature type="binding site" evidence="1">
    <location>
        <begin position="4"/>
        <end position="8"/>
    </location>
    <ligand>
        <name>L-glutamate</name>
        <dbReference type="ChEBI" id="CHEBI:29985"/>
    </ligand>
</feature>
<feature type="binding site" evidence="1">
    <location>
        <position position="40"/>
    </location>
    <ligand>
        <name>L-glutamate</name>
        <dbReference type="ChEBI" id="CHEBI:29985"/>
    </ligand>
</feature>
<feature type="binding site" evidence="1">
    <location>
        <position position="92"/>
    </location>
    <ligand>
        <name>Zn(2+)</name>
        <dbReference type="ChEBI" id="CHEBI:29105"/>
    </ligand>
</feature>
<feature type="binding site" evidence="1">
    <location>
        <position position="94"/>
    </location>
    <ligand>
        <name>Zn(2+)</name>
        <dbReference type="ChEBI" id="CHEBI:29105"/>
    </ligand>
</feature>
<feature type="binding site" evidence="1">
    <location>
        <position position="113"/>
    </location>
    <ligand>
        <name>Zn(2+)</name>
        <dbReference type="ChEBI" id="CHEBI:29105"/>
    </ligand>
</feature>
<feature type="binding site" evidence="1">
    <location>
        <position position="117"/>
    </location>
    <ligand>
        <name>Zn(2+)</name>
        <dbReference type="ChEBI" id="CHEBI:29105"/>
    </ligand>
</feature>
<feature type="binding site" evidence="1">
    <location>
        <position position="180"/>
    </location>
    <ligand>
        <name>L-glutamate</name>
        <dbReference type="ChEBI" id="CHEBI:29985"/>
    </ligand>
</feature>
<feature type="binding site" evidence="1">
    <location>
        <position position="198"/>
    </location>
    <ligand>
        <name>L-glutamate</name>
        <dbReference type="ChEBI" id="CHEBI:29985"/>
    </ligand>
</feature>
<feature type="binding site" evidence="1">
    <location>
        <position position="239"/>
    </location>
    <ligand>
        <name>ATP</name>
        <dbReference type="ChEBI" id="CHEBI:30616"/>
    </ligand>
</feature>
<dbReference type="EC" id="6.1.1.-" evidence="1"/>
<dbReference type="EMBL" id="BA000036">
    <property type="protein sequence ID" value="BAB97629.1"/>
    <property type="molecule type" value="Genomic_DNA"/>
</dbReference>
<dbReference type="EMBL" id="BX927148">
    <property type="protein sequence ID" value="CAF18807.1"/>
    <property type="molecule type" value="Genomic_DNA"/>
</dbReference>
<dbReference type="RefSeq" id="NP_599489.1">
    <property type="nucleotide sequence ID" value="NC_003450.3"/>
</dbReference>
<dbReference type="SMR" id="Q8NTR6"/>
<dbReference type="STRING" id="196627.cg0289"/>
<dbReference type="KEGG" id="cgb:cg0289"/>
<dbReference type="KEGG" id="cgl:Cgl0236"/>
<dbReference type="PATRIC" id="fig|196627.13.peg.241"/>
<dbReference type="eggNOG" id="COG0008">
    <property type="taxonomic scope" value="Bacteria"/>
</dbReference>
<dbReference type="HOGENOM" id="CLU_015768_0_0_11"/>
<dbReference type="OrthoDB" id="9807503at2"/>
<dbReference type="BioCyc" id="CORYNE:G18NG-9790-MONOMER"/>
<dbReference type="Proteomes" id="UP000000582">
    <property type="component" value="Chromosome"/>
</dbReference>
<dbReference type="Proteomes" id="UP000001009">
    <property type="component" value="Chromosome"/>
</dbReference>
<dbReference type="GO" id="GO:0005829">
    <property type="term" value="C:cytosol"/>
    <property type="evidence" value="ECO:0007669"/>
    <property type="project" value="TreeGrafter"/>
</dbReference>
<dbReference type="GO" id="GO:0005524">
    <property type="term" value="F:ATP binding"/>
    <property type="evidence" value="ECO:0007669"/>
    <property type="project" value="UniProtKB-KW"/>
</dbReference>
<dbReference type="GO" id="GO:0004818">
    <property type="term" value="F:glutamate-tRNA ligase activity"/>
    <property type="evidence" value="ECO:0007669"/>
    <property type="project" value="TreeGrafter"/>
</dbReference>
<dbReference type="GO" id="GO:0008270">
    <property type="term" value="F:zinc ion binding"/>
    <property type="evidence" value="ECO:0007669"/>
    <property type="project" value="UniProtKB-UniRule"/>
</dbReference>
<dbReference type="GO" id="GO:0006424">
    <property type="term" value="P:glutamyl-tRNA aminoacylation"/>
    <property type="evidence" value="ECO:0007669"/>
    <property type="project" value="InterPro"/>
</dbReference>
<dbReference type="GO" id="GO:0006400">
    <property type="term" value="P:tRNA modification"/>
    <property type="evidence" value="ECO:0007669"/>
    <property type="project" value="InterPro"/>
</dbReference>
<dbReference type="Gene3D" id="3.40.50.620">
    <property type="entry name" value="HUPs"/>
    <property type="match status" value="1"/>
</dbReference>
<dbReference type="HAMAP" id="MF_01428">
    <property type="entry name" value="Glu_Q_tRNA_synth"/>
    <property type="match status" value="1"/>
</dbReference>
<dbReference type="InterPro" id="IPR022380">
    <property type="entry name" value="Glu-Q_tRNA(Asp)_Synthase"/>
</dbReference>
<dbReference type="InterPro" id="IPR000924">
    <property type="entry name" value="Glu/Gln-tRNA-synth"/>
</dbReference>
<dbReference type="InterPro" id="IPR020058">
    <property type="entry name" value="Glu/Gln-tRNA-synth_Ib_cat-dom"/>
</dbReference>
<dbReference type="InterPro" id="IPR049940">
    <property type="entry name" value="GluQ/Sye"/>
</dbReference>
<dbReference type="InterPro" id="IPR014729">
    <property type="entry name" value="Rossmann-like_a/b/a_fold"/>
</dbReference>
<dbReference type="NCBIfam" id="NF004314">
    <property type="entry name" value="PRK05710.1-3"/>
    <property type="match status" value="1"/>
</dbReference>
<dbReference type="NCBIfam" id="NF004315">
    <property type="entry name" value="PRK05710.1-4"/>
    <property type="match status" value="1"/>
</dbReference>
<dbReference type="NCBIfam" id="TIGR03838">
    <property type="entry name" value="queuosine_YadB"/>
    <property type="match status" value="1"/>
</dbReference>
<dbReference type="PANTHER" id="PTHR43311">
    <property type="entry name" value="GLUTAMATE--TRNA LIGASE"/>
    <property type="match status" value="1"/>
</dbReference>
<dbReference type="PANTHER" id="PTHR43311:SF1">
    <property type="entry name" value="GLUTAMYL-Q TRNA(ASP) SYNTHETASE"/>
    <property type="match status" value="1"/>
</dbReference>
<dbReference type="Pfam" id="PF00749">
    <property type="entry name" value="tRNA-synt_1c"/>
    <property type="match status" value="1"/>
</dbReference>
<dbReference type="PRINTS" id="PR00987">
    <property type="entry name" value="TRNASYNTHGLU"/>
</dbReference>
<dbReference type="SUPFAM" id="SSF52374">
    <property type="entry name" value="Nucleotidylyl transferase"/>
    <property type="match status" value="1"/>
</dbReference>
<accession>Q8NTR6</accession>
<accession>Q6M8B9</accession>
<evidence type="ECO:0000255" key="1">
    <source>
        <dbReference type="HAMAP-Rule" id="MF_01428"/>
    </source>
</evidence>
<sequence>MAGRYAPSPSGDLHFGNLRTALLAWLFARSEGKKFLMRVEDIDEQRSSKESAESQLADLSALGLDWDGDVLYQSTRYDAYRAALEKLDTYECYCSRRDIQEASRAPHVAPGVYPGTCRGLKEEERVEKRATLAAQNRHPAIRLRAQVTSFDFHDRLRGPQTGPVDDFILLRGGQEPGWAYNLAVVVDDAYQGVDQVVRGDDLLDSAARQAYLGSLLGTPAPEYIHVPLVLNAHGQRLAKRDGAVTLKEMLIDAPLHTIFSRLASSLGYEGVNSAPQLLEIFDPTTLSREPFIY</sequence>
<organism>
    <name type="scientific">Corynebacterium glutamicum (strain ATCC 13032 / DSM 20300 / JCM 1318 / BCRC 11384 / CCUG 27702 / LMG 3730 / NBRC 12168 / NCIMB 10025 / NRRL B-2784 / 534)</name>
    <dbReference type="NCBI Taxonomy" id="196627"/>
    <lineage>
        <taxon>Bacteria</taxon>
        <taxon>Bacillati</taxon>
        <taxon>Actinomycetota</taxon>
        <taxon>Actinomycetes</taxon>
        <taxon>Mycobacteriales</taxon>
        <taxon>Corynebacteriaceae</taxon>
        <taxon>Corynebacterium</taxon>
    </lineage>
</organism>
<keyword id="KW-0030">Aminoacyl-tRNA synthetase</keyword>
<keyword id="KW-0067">ATP-binding</keyword>
<keyword id="KW-0436">Ligase</keyword>
<keyword id="KW-0479">Metal-binding</keyword>
<keyword id="KW-0547">Nucleotide-binding</keyword>
<keyword id="KW-1185">Reference proteome</keyword>
<keyword id="KW-0862">Zinc</keyword>
<proteinExistence type="inferred from homology"/>
<reference key="1">
    <citation type="journal article" date="2003" name="Appl. Microbiol. Biotechnol.">
        <title>The Corynebacterium glutamicum genome: features and impacts on biotechnological processes.</title>
        <authorList>
            <person name="Ikeda M."/>
            <person name="Nakagawa S."/>
        </authorList>
    </citation>
    <scope>NUCLEOTIDE SEQUENCE [LARGE SCALE GENOMIC DNA]</scope>
    <source>
        <strain>ATCC 13032 / DSM 20300 / JCM 1318 / BCRC 11384 / CCUG 27702 / LMG 3730 / NBRC 12168 / NCIMB 10025 / NRRL B-2784 / 534</strain>
    </source>
</reference>
<reference key="2">
    <citation type="journal article" date="2003" name="J. Biotechnol.">
        <title>The complete Corynebacterium glutamicum ATCC 13032 genome sequence and its impact on the production of L-aspartate-derived amino acids and vitamins.</title>
        <authorList>
            <person name="Kalinowski J."/>
            <person name="Bathe B."/>
            <person name="Bartels D."/>
            <person name="Bischoff N."/>
            <person name="Bott M."/>
            <person name="Burkovski A."/>
            <person name="Dusch N."/>
            <person name="Eggeling L."/>
            <person name="Eikmanns B.J."/>
            <person name="Gaigalat L."/>
            <person name="Goesmann A."/>
            <person name="Hartmann M."/>
            <person name="Huthmacher K."/>
            <person name="Kraemer R."/>
            <person name="Linke B."/>
            <person name="McHardy A.C."/>
            <person name="Meyer F."/>
            <person name="Moeckel B."/>
            <person name="Pfefferle W."/>
            <person name="Puehler A."/>
            <person name="Rey D.A."/>
            <person name="Rueckert C."/>
            <person name="Rupp O."/>
            <person name="Sahm H."/>
            <person name="Wendisch V.F."/>
            <person name="Wiegraebe I."/>
            <person name="Tauch A."/>
        </authorList>
    </citation>
    <scope>NUCLEOTIDE SEQUENCE [LARGE SCALE GENOMIC DNA]</scope>
    <source>
        <strain>ATCC 13032 / DSM 20300 / JCM 1318 / BCRC 11384 / CCUG 27702 / LMG 3730 / NBRC 12168 / NCIMB 10025 / NRRL B-2784 / 534</strain>
    </source>
</reference>